<protein>
    <recommendedName>
        <fullName evidence="1">ATP synthase subunit a</fullName>
    </recommendedName>
    <alternativeName>
        <fullName evidence="1">ATP synthase F0 sector subunit a</fullName>
    </alternativeName>
    <alternativeName>
        <fullName evidence="1">F-ATPase subunit 6</fullName>
    </alternativeName>
</protein>
<reference key="1">
    <citation type="journal article" date="2010" name="Genome Biol.">
        <title>Structure and dynamics of the pan-genome of Streptococcus pneumoniae and closely related species.</title>
        <authorList>
            <person name="Donati C."/>
            <person name="Hiller N.L."/>
            <person name="Tettelin H."/>
            <person name="Muzzi A."/>
            <person name="Croucher N.J."/>
            <person name="Angiuoli S.V."/>
            <person name="Oggioni M."/>
            <person name="Dunning Hotopp J.C."/>
            <person name="Hu F.Z."/>
            <person name="Riley D.R."/>
            <person name="Covacci A."/>
            <person name="Mitchell T.J."/>
            <person name="Bentley S.D."/>
            <person name="Kilian M."/>
            <person name="Ehrlich G.D."/>
            <person name="Rappuoli R."/>
            <person name="Moxon E.R."/>
            <person name="Masignani V."/>
        </authorList>
    </citation>
    <scope>NUCLEOTIDE SEQUENCE [LARGE SCALE GENOMIC DNA]</scope>
    <source>
        <strain>70585</strain>
    </source>
</reference>
<proteinExistence type="inferred from homology"/>
<evidence type="ECO:0000255" key="1">
    <source>
        <dbReference type="HAMAP-Rule" id="MF_01393"/>
    </source>
</evidence>
<feature type="chain" id="PRO_1000215154" description="ATP synthase subunit a">
    <location>
        <begin position="1"/>
        <end position="238"/>
    </location>
</feature>
<feature type="transmembrane region" description="Helical" evidence="1">
    <location>
        <begin position="15"/>
        <end position="35"/>
    </location>
</feature>
<feature type="transmembrane region" description="Helical" evidence="1">
    <location>
        <begin position="76"/>
        <end position="96"/>
    </location>
</feature>
<feature type="transmembrane region" description="Helical" evidence="1">
    <location>
        <begin position="111"/>
        <end position="131"/>
    </location>
</feature>
<feature type="transmembrane region" description="Helical" evidence="1">
    <location>
        <begin position="167"/>
        <end position="187"/>
    </location>
</feature>
<feature type="transmembrane region" description="Helical" evidence="1">
    <location>
        <begin position="208"/>
        <end position="230"/>
    </location>
</feature>
<accession>C1C8A4</accession>
<organism>
    <name type="scientific">Streptococcus pneumoniae (strain 70585)</name>
    <dbReference type="NCBI Taxonomy" id="488221"/>
    <lineage>
        <taxon>Bacteria</taxon>
        <taxon>Bacillati</taxon>
        <taxon>Bacillota</taxon>
        <taxon>Bacilli</taxon>
        <taxon>Lactobacillales</taxon>
        <taxon>Streptococcaceae</taxon>
        <taxon>Streptococcus</taxon>
    </lineage>
</organism>
<gene>
    <name evidence="1" type="primary">atpB</name>
    <name type="ordered locus">SP70585_1550</name>
</gene>
<sequence>MEESINPIISIGPVIFNLTMLAMTLLIVGVIFVFIYWASRNMTLKPKGKQNVLEYVYDFVIGFTEPNIGSRYMKDYSLFFLCLFLFMVIANNLGLMTKIQTIDGTNWWSSPTANLQYDLTLSFLVILLTHIESVRRRGFKKSIKSFMSPVFVIPMNILEEFTNFLSLALRIFGNIFAGEVMTSLLLLLSHQAIYWYPVAFGANLAWTAFSVFISCIQAYVFTLLTSVYLGNKINIEEE</sequence>
<keyword id="KW-0066">ATP synthesis</keyword>
<keyword id="KW-1003">Cell membrane</keyword>
<keyword id="KW-0138">CF(0)</keyword>
<keyword id="KW-0375">Hydrogen ion transport</keyword>
<keyword id="KW-0406">Ion transport</keyword>
<keyword id="KW-0472">Membrane</keyword>
<keyword id="KW-0812">Transmembrane</keyword>
<keyword id="KW-1133">Transmembrane helix</keyword>
<keyword id="KW-0813">Transport</keyword>
<dbReference type="EMBL" id="CP000918">
    <property type="protein sequence ID" value="ACO17106.1"/>
    <property type="molecule type" value="Genomic_DNA"/>
</dbReference>
<dbReference type="RefSeq" id="WP_000392849.1">
    <property type="nucleotide sequence ID" value="NC_012468.1"/>
</dbReference>
<dbReference type="SMR" id="C1C8A4"/>
<dbReference type="KEGG" id="snm:SP70585_1550"/>
<dbReference type="HOGENOM" id="CLU_041018_2_3_9"/>
<dbReference type="Proteomes" id="UP000002211">
    <property type="component" value="Chromosome"/>
</dbReference>
<dbReference type="GO" id="GO:0005886">
    <property type="term" value="C:plasma membrane"/>
    <property type="evidence" value="ECO:0007669"/>
    <property type="project" value="UniProtKB-SubCell"/>
</dbReference>
<dbReference type="GO" id="GO:0045259">
    <property type="term" value="C:proton-transporting ATP synthase complex"/>
    <property type="evidence" value="ECO:0007669"/>
    <property type="project" value="UniProtKB-KW"/>
</dbReference>
<dbReference type="GO" id="GO:0046933">
    <property type="term" value="F:proton-transporting ATP synthase activity, rotational mechanism"/>
    <property type="evidence" value="ECO:0007669"/>
    <property type="project" value="UniProtKB-UniRule"/>
</dbReference>
<dbReference type="GO" id="GO:0042777">
    <property type="term" value="P:proton motive force-driven plasma membrane ATP synthesis"/>
    <property type="evidence" value="ECO:0007669"/>
    <property type="project" value="TreeGrafter"/>
</dbReference>
<dbReference type="CDD" id="cd00310">
    <property type="entry name" value="ATP-synt_Fo_a_6"/>
    <property type="match status" value="1"/>
</dbReference>
<dbReference type="Gene3D" id="1.20.120.220">
    <property type="entry name" value="ATP synthase, F0 complex, subunit A"/>
    <property type="match status" value="1"/>
</dbReference>
<dbReference type="HAMAP" id="MF_01393">
    <property type="entry name" value="ATP_synth_a_bact"/>
    <property type="match status" value="1"/>
</dbReference>
<dbReference type="InterPro" id="IPR045082">
    <property type="entry name" value="ATP_syn_F0_a_bact/chloroplast"/>
</dbReference>
<dbReference type="InterPro" id="IPR000568">
    <property type="entry name" value="ATP_synth_F0_asu"/>
</dbReference>
<dbReference type="InterPro" id="IPR035908">
    <property type="entry name" value="F0_ATP_A_sf"/>
</dbReference>
<dbReference type="NCBIfam" id="TIGR01131">
    <property type="entry name" value="ATP_synt_6_or_A"/>
    <property type="match status" value="1"/>
</dbReference>
<dbReference type="NCBIfam" id="NF004479">
    <property type="entry name" value="PRK05815.1-4"/>
    <property type="match status" value="1"/>
</dbReference>
<dbReference type="PANTHER" id="PTHR42823">
    <property type="entry name" value="ATP SYNTHASE SUBUNIT A, CHLOROPLASTIC"/>
    <property type="match status" value="1"/>
</dbReference>
<dbReference type="PANTHER" id="PTHR42823:SF3">
    <property type="entry name" value="ATP SYNTHASE SUBUNIT A, CHLOROPLASTIC"/>
    <property type="match status" value="1"/>
</dbReference>
<dbReference type="Pfam" id="PF00119">
    <property type="entry name" value="ATP-synt_A"/>
    <property type="match status" value="1"/>
</dbReference>
<dbReference type="PRINTS" id="PR00123">
    <property type="entry name" value="ATPASEA"/>
</dbReference>
<dbReference type="SUPFAM" id="SSF81336">
    <property type="entry name" value="F1F0 ATP synthase subunit A"/>
    <property type="match status" value="1"/>
</dbReference>
<comment type="function">
    <text evidence="1">Key component of the proton channel; it plays a direct role in the translocation of protons across the membrane.</text>
</comment>
<comment type="subunit">
    <text evidence="1">F-type ATPases have 2 components, CF(1) - the catalytic core - and CF(0) - the membrane proton channel. CF(1) has five subunits: alpha(3), beta(3), gamma(1), delta(1), epsilon(1). CF(0) has three main subunits: a(1), b(2) and c(9-12). The alpha and beta chains form an alternating ring which encloses part of the gamma chain. CF(1) is attached to CF(0) by a central stalk formed by the gamma and epsilon chains, while a peripheral stalk is formed by the delta and b chains.</text>
</comment>
<comment type="subcellular location">
    <subcellularLocation>
        <location evidence="1">Cell membrane</location>
        <topology evidence="1">Multi-pass membrane protein</topology>
    </subcellularLocation>
</comment>
<comment type="similarity">
    <text evidence="1">Belongs to the ATPase A chain family.</text>
</comment>
<name>ATP6_STRP7</name>